<name>FLRN_ANTEL</name>
<sequence>FLRN</sequence>
<accession>P58707</accession>
<reference key="1">
    <citation type="journal article" date="1990" name="Proc. Natl. Acad. Sci. U.S.A.">
        <title>Isolation of L-3-phenyllactyl-Leu-Arg-Asn-NH2 (Antho-RNamide), a sea anemone neuropeptide containing an unusual amino-terminal blocking group.</title>
        <authorList>
            <person name="Grimmelikhuijzen C.J.P."/>
            <person name="Rinehart K.L. Jr."/>
            <person name="Jacob E."/>
            <person name="Graff D."/>
            <person name="Reinscheid R.K."/>
            <person name="Nothacker H.-P."/>
            <person name="Staley A.L."/>
        </authorList>
    </citation>
    <scope>PROTEIN SEQUENCE</scope>
    <scope>AMIDATION AT ASN-4</scope>
    <scope>MASS SPECTROMETRY</scope>
</reference>
<proteinExistence type="evidence at protein level"/>
<protein>
    <recommendedName>
        <fullName>Antho-RNamide</fullName>
    </recommendedName>
</protein>
<organism>
    <name type="scientific">Anthopleura elegantissima</name>
    <name type="common">Green aggregating anemone</name>
    <name type="synonym">Actinia elegantissima</name>
    <dbReference type="NCBI Taxonomy" id="6110"/>
    <lineage>
        <taxon>Eukaryota</taxon>
        <taxon>Metazoa</taxon>
        <taxon>Cnidaria</taxon>
        <taxon>Anthozoa</taxon>
        <taxon>Hexacorallia</taxon>
        <taxon>Actiniaria</taxon>
        <taxon>Actiniidae</taxon>
        <taxon>Anthopleura</taxon>
    </lineage>
</organism>
<dbReference type="PIR" id="A35779">
    <property type="entry name" value="A35779"/>
</dbReference>
<dbReference type="GO" id="GO:0005576">
    <property type="term" value="C:extracellular region"/>
    <property type="evidence" value="ECO:0007669"/>
    <property type="project" value="UniProtKB-SubCell"/>
</dbReference>
<dbReference type="GO" id="GO:0007218">
    <property type="term" value="P:neuropeptide signaling pathway"/>
    <property type="evidence" value="ECO:0007669"/>
    <property type="project" value="UniProtKB-KW"/>
</dbReference>
<feature type="peptide" id="PRO_0000043715" description="Antho-RNamide">
    <location>
        <begin position="1"/>
        <end position="4"/>
    </location>
</feature>
<feature type="modified residue" description="3-phenyllactic acid">
    <location>
        <position position="1"/>
    </location>
</feature>
<feature type="modified residue" description="Asparagine amide" evidence="1">
    <location>
        <position position="4"/>
    </location>
</feature>
<keyword id="KW-0027">Amidation</keyword>
<keyword id="KW-0903">Direct protein sequencing</keyword>
<keyword id="KW-0527">Neuropeptide</keyword>
<keyword id="KW-0964">Secreted</keyword>
<comment type="subcellular location">
    <subcellularLocation>
        <location>Secreted</location>
    </subcellularLocation>
</comment>
<comment type="tissue specificity">
    <text>Neuron specific.</text>
</comment>
<comment type="mass spectrometry"/>
<evidence type="ECO:0000269" key="1">
    <source>
    </source>
</evidence>